<keyword id="KW-0342">GTP-binding</keyword>
<keyword id="KW-0378">Hydrolase</keyword>
<keyword id="KW-0479">Metal-binding</keyword>
<keyword id="KW-0547">Nucleotide-binding</keyword>
<keyword id="KW-0554">One-carbon metabolism</keyword>
<keyword id="KW-1185">Reference proteome</keyword>
<keyword id="KW-0862">Zinc</keyword>
<dbReference type="EC" id="3.5.4.16" evidence="1"/>
<dbReference type="EMBL" id="CP000924">
    <property type="protein sequence ID" value="ABY93988.1"/>
    <property type="molecule type" value="Genomic_DNA"/>
</dbReference>
<dbReference type="RefSeq" id="WP_003867817.1">
    <property type="nucleotide sequence ID" value="NC_010321.1"/>
</dbReference>
<dbReference type="SMR" id="B0KCE5"/>
<dbReference type="STRING" id="340099.Teth39_0319"/>
<dbReference type="KEGG" id="tpd:Teth39_0319"/>
<dbReference type="eggNOG" id="COG0302">
    <property type="taxonomic scope" value="Bacteria"/>
</dbReference>
<dbReference type="HOGENOM" id="CLU_049768_3_3_9"/>
<dbReference type="UniPathway" id="UPA00848">
    <property type="reaction ID" value="UER00151"/>
</dbReference>
<dbReference type="Proteomes" id="UP000002156">
    <property type="component" value="Chromosome"/>
</dbReference>
<dbReference type="GO" id="GO:0005737">
    <property type="term" value="C:cytoplasm"/>
    <property type="evidence" value="ECO:0007669"/>
    <property type="project" value="TreeGrafter"/>
</dbReference>
<dbReference type="GO" id="GO:0005525">
    <property type="term" value="F:GTP binding"/>
    <property type="evidence" value="ECO:0007669"/>
    <property type="project" value="UniProtKB-KW"/>
</dbReference>
<dbReference type="GO" id="GO:0003934">
    <property type="term" value="F:GTP cyclohydrolase I activity"/>
    <property type="evidence" value="ECO:0007669"/>
    <property type="project" value="UniProtKB-UniRule"/>
</dbReference>
<dbReference type="GO" id="GO:0008270">
    <property type="term" value="F:zinc ion binding"/>
    <property type="evidence" value="ECO:0007669"/>
    <property type="project" value="UniProtKB-UniRule"/>
</dbReference>
<dbReference type="GO" id="GO:0006730">
    <property type="term" value="P:one-carbon metabolic process"/>
    <property type="evidence" value="ECO:0007669"/>
    <property type="project" value="UniProtKB-UniRule"/>
</dbReference>
<dbReference type="GO" id="GO:0006729">
    <property type="term" value="P:tetrahydrobiopterin biosynthetic process"/>
    <property type="evidence" value="ECO:0007669"/>
    <property type="project" value="TreeGrafter"/>
</dbReference>
<dbReference type="GO" id="GO:0046654">
    <property type="term" value="P:tetrahydrofolate biosynthetic process"/>
    <property type="evidence" value="ECO:0007669"/>
    <property type="project" value="UniProtKB-UniRule"/>
</dbReference>
<dbReference type="FunFam" id="1.10.286.10:FF:000001">
    <property type="entry name" value="GTP cyclohydrolase 1"/>
    <property type="match status" value="1"/>
</dbReference>
<dbReference type="FunFam" id="3.30.1130.10:FF:000001">
    <property type="entry name" value="GTP cyclohydrolase 1"/>
    <property type="match status" value="1"/>
</dbReference>
<dbReference type="Gene3D" id="1.10.286.10">
    <property type="match status" value="1"/>
</dbReference>
<dbReference type="Gene3D" id="3.30.1130.10">
    <property type="match status" value="1"/>
</dbReference>
<dbReference type="HAMAP" id="MF_00223">
    <property type="entry name" value="FolE"/>
    <property type="match status" value="1"/>
</dbReference>
<dbReference type="InterPro" id="IPR043133">
    <property type="entry name" value="GTP-CH-I_C/QueF"/>
</dbReference>
<dbReference type="InterPro" id="IPR043134">
    <property type="entry name" value="GTP-CH-I_N"/>
</dbReference>
<dbReference type="InterPro" id="IPR001474">
    <property type="entry name" value="GTP_CycHdrlase_I"/>
</dbReference>
<dbReference type="InterPro" id="IPR018234">
    <property type="entry name" value="GTP_CycHdrlase_I_CS"/>
</dbReference>
<dbReference type="InterPro" id="IPR020602">
    <property type="entry name" value="GTP_CycHdrlase_I_dom"/>
</dbReference>
<dbReference type="NCBIfam" id="TIGR00063">
    <property type="entry name" value="folE"/>
    <property type="match status" value="1"/>
</dbReference>
<dbReference type="NCBIfam" id="NF006825">
    <property type="entry name" value="PRK09347.1-2"/>
    <property type="match status" value="1"/>
</dbReference>
<dbReference type="NCBIfam" id="NF006826">
    <property type="entry name" value="PRK09347.1-3"/>
    <property type="match status" value="1"/>
</dbReference>
<dbReference type="PANTHER" id="PTHR11109:SF7">
    <property type="entry name" value="GTP CYCLOHYDROLASE 1"/>
    <property type="match status" value="1"/>
</dbReference>
<dbReference type="PANTHER" id="PTHR11109">
    <property type="entry name" value="GTP CYCLOHYDROLASE I"/>
    <property type="match status" value="1"/>
</dbReference>
<dbReference type="Pfam" id="PF01227">
    <property type="entry name" value="GTP_cyclohydroI"/>
    <property type="match status" value="1"/>
</dbReference>
<dbReference type="SUPFAM" id="SSF55620">
    <property type="entry name" value="Tetrahydrobiopterin biosynthesis enzymes-like"/>
    <property type="match status" value="1"/>
</dbReference>
<dbReference type="PROSITE" id="PS00859">
    <property type="entry name" value="GTP_CYCLOHYDROL_1_1"/>
    <property type="match status" value="1"/>
</dbReference>
<dbReference type="PROSITE" id="PS00860">
    <property type="entry name" value="GTP_CYCLOHYDROL_1_2"/>
    <property type="match status" value="1"/>
</dbReference>
<name>GCH1_THEP3</name>
<comment type="catalytic activity">
    <reaction evidence="1">
        <text>GTP + H2O = 7,8-dihydroneopterin 3'-triphosphate + formate + H(+)</text>
        <dbReference type="Rhea" id="RHEA:17473"/>
        <dbReference type="ChEBI" id="CHEBI:15377"/>
        <dbReference type="ChEBI" id="CHEBI:15378"/>
        <dbReference type="ChEBI" id="CHEBI:15740"/>
        <dbReference type="ChEBI" id="CHEBI:37565"/>
        <dbReference type="ChEBI" id="CHEBI:58462"/>
        <dbReference type="EC" id="3.5.4.16"/>
    </reaction>
</comment>
<comment type="pathway">
    <text evidence="1">Cofactor biosynthesis; 7,8-dihydroneopterin triphosphate biosynthesis; 7,8-dihydroneopterin triphosphate from GTP: step 1/1.</text>
</comment>
<comment type="subunit">
    <text evidence="1">Homomer.</text>
</comment>
<comment type="similarity">
    <text evidence="1">Belongs to the GTP cyclohydrolase I family.</text>
</comment>
<reference key="1">
    <citation type="submission" date="2008-01" db="EMBL/GenBank/DDBJ databases">
        <title>Complete sequence of Thermoanaerobacter pseudethanolicus 39E.</title>
        <authorList>
            <person name="Copeland A."/>
            <person name="Lucas S."/>
            <person name="Lapidus A."/>
            <person name="Barry K."/>
            <person name="Glavina del Rio T."/>
            <person name="Dalin E."/>
            <person name="Tice H."/>
            <person name="Pitluck S."/>
            <person name="Bruce D."/>
            <person name="Goodwin L."/>
            <person name="Saunders E."/>
            <person name="Brettin T."/>
            <person name="Detter J.C."/>
            <person name="Han C."/>
            <person name="Schmutz J."/>
            <person name="Larimer F."/>
            <person name="Land M."/>
            <person name="Hauser L."/>
            <person name="Kyrpides N."/>
            <person name="Lykidis A."/>
            <person name="Hemme C."/>
            <person name="Fields M.W."/>
            <person name="He Z."/>
            <person name="Zhou J."/>
            <person name="Richardson P."/>
        </authorList>
    </citation>
    <scope>NUCLEOTIDE SEQUENCE [LARGE SCALE GENOMIC DNA]</scope>
    <source>
        <strain>ATCC 33223 / DSM 2355 / 39E</strain>
    </source>
</reference>
<sequence>MIDKEKIKKAVRDILEAIGEDPDREGLLETPDRVARMYEEIFAGLHTDVKDVIKIFQEDEHQEIILVKDIPLYSMCEHHLLPFIGVAHVAYLPRKGRILGLSKLARIVDILAKRPQLQERLTSEIADTIMEAVNPLGVAVVIEAEHLCMTMRGIKKPGAKTVTSALRGIFRTDEKSRAEVMSLINSKK</sequence>
<evidence type="ECO:0000255" key="1">
    <source>
        <dbReference type="HAMAP-Rule" id="MF_00223"/>
    </source>
</evidence>
<organism>
    <name type="scientific">Thermoanaerobacter pseudethanolicus (strain ATCC 33223 / 39E)</name>
    <name type="common">Clostridium thermohydrosulfuricum</name>
    <dbReference type="NCBI Taxonomy" id="340099"/>
    <lineage>
        <taxon>Bacteria</taxon>
        <taxon>Bacillati</taxon>
        <taxon>Bacillota</taxon>
        <taxon>Clostridia</taxon>
        <taxon>Thermoanaerobacterales</taxon>
        <taxon>Thermoanaerobacteraceae</taxon>
        <taxon>Thermoanaerobacter</taxon>
    </lineage>
</organism>
<gene>
    <name evidence="1" type="primary">folE</name>
    <name type="ordered locus">Teth39_0319</name>
</gene>
<accession>B0KCE5</accession>
<proteinExistence type="inferred from homology"/>
<feature type="chain" id="PRO_1000100206" description="GTP cyclohydrolase 1">
    <location>
        <begin position="1"/>
        <end position="188"/>
    </location>
</feature>
<feature type="binding site" evidence="1">
    <location>
        <position position="76"/>
    </location>
    <ligand>
        <name>Zn(2+)</name>
        <dbReference type="ChEBI" id="CHEBI:29105"/>
    </ligand>
</feature>
<feature type="binding site" evidence="1">
    <location>
        <position position="79"/>
    </location>
    <ligand>
        <name>Zn(2+)</name>
        <dbReference type="ChEBI" id="CHEBI:29105"/>
    </ligand>
</feature>
<feature type="binding site" evidence="1">
    <location>
        <position position="148"/>
    </location>
    <ligand>
        <name>Zn(2+)</name>
        <dbReference type="ChEBI" id="CHEBI:29105"/>
    </ligand>
</feature>
<protein>
    <recommendedName>
        <fullName evidence="1">GTP cyclohydrolase 1</fullName>
        <ecNumber evidence="1">3.5.4.16</ecNumber>
    </recommendedName>
    <alternativeName>
        <fullName evidence="1">GTP cyclohydrolase I</fullName>
        <shortName evidence="1">GTP-CH-I</shortName>
    </alternativeName>
</protein>